<organism>
    <name type="scientific">Shigella dysenteriae serotype 1 (strain Sd197)</name>
    <dbReference type="NCBI Taxonomy" id="300267"/>
    <lineage>
        <taxon>Bacteria</taxon>
        <taxon>Pseudomonadati</taxon>
        <taxon>Pseudomonadota</taxon>
        <taxon>Gammaproteobacteria</taxon>
        <taxon>Enterobacterales</taxon>
        <taxon>Enterobacteriaceae</taxon>
        <taxon>Shigella</taxon>
    </lineage>
</organism>
<feature type="chain" id="PRO_0000305598" description="Anaerobic nitric oxide reductase flavorubredoxin">
    <location>
        <begin position="1"/>
        <end position="479"/>
    </location>
</feature>
<feature type="domain" description="Flavodoxin-like" evidence="1">
    <location>
        <begin position="254"/>
        <end position="393"/>
    </location>
</feature>
<feature type="domain" description="Rubredoxin-like" evidence="1">
    <location>
        <begin position="423"/>
        <end position="474"/>
    </location>
</feature>
<feature type="region of interest" description="Zinc metallo-hydrolase">
    <location>
        <begin position="30"/>
        <end position="210"/>
    </location>
</feature>
<feature type="binding site" evidence="1">
    <location>
        <position position="79"/>
    </location>
    <ligand>
        <name>Fe cation</name>
        <dbReference type="ChEBI" id="CHEBI:24875"/>
        <label>1</label>
    </ligand>
</feature>
<feature type="binding site" evidence="1">
    <location>
        <position position="81"/>
    </location>
    <ligand>
        <name>Fe cation</name>
        <dbReference type="ChEBI" id="CHEBI:24875"/>
        <label>1</label>
    </ligand>
</feature>
<feature type="binding site" evidence="1">
    <location>
        <position position="83"/>
    </location>
    <ligand>
        <name>Fe cation</name>
        <dbReference type="ChEBI" id="CHEBI:24875"/>
        <label>2</label>
    </ligand>
</feature>
<feature type="binding site" evidence="1">
    <location>
        <position position="147"/>
    </location>
    <ligand>
        <name>Fe cation</name>
        <dbReference type="ChEBI" id="CHEBI:24875"/>
        <label>1</label>
    </ligand>
</feature>
<feature type="binding site" evidence="1">
    <location>
        <position position="166"/>
    </location>
    <ligand>
        <name>Fe cation</name>
        <dbReference type="ChEBI" id="CHEBI:24875"/>
        <label>1</label>
    </ligand>
</feature>
<feature type="binding site" evidence="1">
    <location>
        <position position="166"/>
    </location>
    <ligand>
        <name>Fe cation</name>
        <dbReference type="ChEBI" id="CHEBI:24875"/>
        <label>2</label>
    </ligand>
</feature>
<feature type="binding site" evidence="1">
    <location>
        <position position="227"/>
    </location>
    <ligand>
        <name>Fe cation</name>
        <dbReference type="ChEBI" id="CHEBI:24875"/>
        <label>2</label>
    </ligand>
</feature>
<feature type="binding site" evidence="1">
    <location>
        <begin position="260"/>
        <end position="264"/>
    </location>
    <ligand>
        <name>FMN</name>
        <dbReference type="ChEBI" id="CHEBI:58210"/>
    </ligand>
</feature>
<feature type="binding site" evidence="1">
    <location>
        <begin position="342"/>
        <end position="369"/>
    </location>
    <ligand>
        <name>FMN</name>
        <dbReference type="ChEBI" id="CHEBI:58210"/>
    </ligand>
</feature>
<feature type="binding site" evidence="1">
    <location>
        <position position="428"/>
    </location>
    <ligand>
        <name>Fe cation</name>
        <dbReference type="ChEBI" id="CHEBI:24875"/>
        <label>3</label>
    </ligand>
</feature>
<feature type="binding site" evidence="1">
    <location>
        <position position="431"/>
    </location>
    <ligand>
        <name>Fe cation</name>
        <dbReference type="ChEBI" id="CHEBI:24875"/>
        <label>3</label>
    </ligand>
</feature>
<feature type="binding site" evidence="1">
    <location>
        <position position="461"/>
    </location>
    <ligand>
        <name>Fe cation</name>
        <dbReference type="ChEBI" id="CHEBI:24875"/>
        <label>3</label>
    </ligand>
</feature>
<feature type="binding site" evidence="1">
    <location>
        <position position="464"/>
    </location>
    <ligand>
        <name>Fe cation</name>
        <dbReference type="ChEBI" id="CHEBI:24875"/>
        <label>3</label>
    </ligand>
</feature>
<dbReference type="EMBL" id="CP000034">
    <property type="protein sequence ID" value="ABB62937.1"/>
    <property type="molecule type" value="Genomic_DNA"/>
</dbReference>
<dbReference type="RefSeq" id="WP_000029641.1">
    <property type="nucleotide sequence ID" value="NC_007606.1"/>
</dbReference>
<dbReference type="RefSeq" id="YP_404428.1">
    <property type="nucleotide sequence ID" value="NC_007606.1"/>
</dbReference>
<dbReference type="SMR" id="Q32CL8"/>
<dbReference type="STRING" id="300267.SDY_2907"/>
<dbReference type="EnsemblBacteria" id="ABB62937">
    <property type="protein sequence ID" value="ABB62937"/>
    <property type="gene ID" value="SDY_2907"/>
</dbReference>
<dbReference type="KEGG" id="sdy:SDY_2907"/>
<dbReference type="PATRIC" id="fig|300267.13.peg.3492"/>
<dbReference type="HOGENOM" id="CLU_017490_0_1_6"/>
<dbReference type="UniPathway" id="UPA00638"/>
<dbReference type="Proteomes" id="UP000002716">
    <property type="component" value="Chromosome"/>
</dbReference>
<dbReference type="GO" id="GO:0005737">
    <property type="term" value="C:cytoplasm"/>
    <property type="evidence" value="ECO:0007669"/>
    <property type="project" value="UniProtKB-SubCell"/>
</dbReference>
<dbReference type="GO" id="GO:0009055">
    <property type="term" value="F:electron transfer activity"/>
    <property type="evidence" value="ECO:0007669"/>
    <property type="project" value="UniProtKB-UniRule"/>
</dbReference>
<dbReference type="GO" id="GO:0010181">
    <property type="term" value="F:FMN binding"/>
    <property type="evidence" value="ECO:0007669"/>
    <property type="project" value="InterPro"/>
</dbReference>
<dbReference type="GO" id="GO:0005506">
    <property type="term" value="F:iron ion binding"/>
    <property type="evidence" value="ECO:0007669"/>
    <property type="project" value="InterPro"/>
</dbReference>
<dbReference type="GO" id="GO:0016966">
    <property type="term" value="F:nitric oxide reductase activity"/>
    <property type="evidence" value="ECO:0007669"/>
    <property type="project" value="InterPro"/>
</dbReference>
<dbReference type="CDD" id="cd07709">
    <property type="entry name" value="flavodiiron_proteins_MBL-fold"/>
    <property type="match status" value="1"/>
</dbReference>
<dbReference type="CDD" id="cd00730">
    <property type="entry name" value="rubredoxin"/>
    <property type="match status" value="1"/>
</dbReference>
<dbReference type="FunFam" id="2.20.28.10:FF:000010">
    <property type="entry name" value="Anaerobic nitric oxide reductase flavorubredoxin"/>
    <property type="match status" value="1"/>
</dbReference>
<dbReference type="FunFam" id="3.40.50.360:FF:000012">
    <property type="entry name" value="Anaerobic nitric oxide reductase flavorubredoxin"/>
    <property type="match status" value="1"/>
</dbReference>
<dbReference type="FunFam" id="3.60.15.10:FF:000009">
    <property type="entry name" value="Anaerobic nitric oxide reductase flavorubredoxin"/>
    <property type="match status" value="1"/>
</dbReference>
<dbReference type="Gene3D" id="2.20.28.10">
    <property type="match status" value="1"/>
</dbReference>
<dbReference type="Gene3D" id="3.40.50.360">
    <property type="match status" value="1"/>
</dbReference>
<dbReference type="Gene3D" id="3.60.15.10">
    <property type="entry name" value="Ribonuclease Z/Hydroxyacylglutathione hydrolase-like"/>
    <property type="match status" value="1"/>
</dbReference>
<dbReference type="HAMAP" id="MF_01312">
    <property type="entry name" value="NorV"/>
    <property type="match status" value="1"/>
</dbReference>
<dbReference type="InterPro" id="IPR023957">
    <property type="entry name" value="Anaer_NO_rdtase_flvorubredoxin"/>
</dbReference>
<dbReference type="InterPro" id="IPR008254">
    <property type="entry name" value="Flavodoxin/NO_synth"/>
</dbReference>
<dbReference type="InterPro" id="IPR029039">
    <property type="entry name" value="Flavoprotein-like_sf"/>
</dbReference>
<dbReference type="InterPro" id="IPR001279">
    <property type="entry name" value="Metallo-B-lactamas"/>
</dbReference>
<dbReference type="InterPro" id="IPR045761">
    <property type="entry name" value="ODP_dom"/>
</dbReference>
<dbReference type="InterPro" id="IPR036866">
    <property type="entry name" value="RibonucZ/Hydroxyglut_hydro"/>
</dbReference>
<dbReference type="InterPro" id="IPR024934">
    <property type="entry name" value="Rubredoxin-like_dom"/>
</dbReference>
<dbReference type="InterPro" id="IPR016440">
    <property type="entry name" value="Rubredoxin-O_OxRdtase"/>
</dbReference>
<dbReference type="InterPro" id="IPR024935">
    <property type="entry name" value="Rubredoxin_dom"/>
</dbReference>
<dbReference type="NCBIfam" id="NF003954">
    <property type="entry name" value="PRK05452.1"/>
    <property type="match status" value="1"/>
</dbReference>
<dbReference type="PANTHER" id="PTHR43717">
    <property type="entry name" value="ANAEROBIC NITRIC OXIDE REDUCTASE FLAVORUBREDOXIN"/>
    <property type="match status" value="1"/>
</dbReference>
<dbReference type="PANTHER" id="PTHR43717:SF1">
    <property type="entry name" value="ANAEROBIC NITRIC OXIDE REDUCTASE FLAVORUBREDOXIN"/>
    <property type="match status" value="1"/>
</dbReference>
<dbReference type="Pfam" id="PF00258">
    <property type="entry name" value="Flavodoxin_1"/>
    <property type="match status" value="1"/>
</dbReference>
<dbReference type="Pfam" id="PF19583">
    <property type="entry name" value="ODP"/>
    <property type="match status" value="1"/>
</dbReference>
<dbReference type="Pfam" id="PF00301">
    <property type="entry name" value="Rubredoxin"/>
    <property type="match status" value="1"/>
</dbReference>
<dbReference type="PIRSF" id="PIRSF005243">
    <property type="entry name" value="ROO"/>
    <property type="match status" value="1"/>
</dbReference>
<dbReference type="PRINTS" id="PR00163">
    <property type="entry name" value="RUBREDOXIN"/>
</dbReference>
<dbReference type="SMART" id="SM00849">
    <property type="entry name" value="Lactamase_B"/>
    <property type="match status" value="1"/>
</dbReference>
<dbReference type="SUPFAM" id="SSF52218">
    <property type="entry name" value="Flavoproteins"/>
    <property type="match status" value="1"/>
</dbReference>
<dbReference type="SUPFAM" id="SSF56281">
    <property type="entry name" value="Metallo-hydrolase/oxidoreductase"/>
    <property type="match status" value="1"/>
</dbReference>
<dbReference type="SUPFAM" id="SSF57802">
    <property type="entry name" value="Rubredoxin-like"/>
    <property type="match status" value="1"/>
</dbReference>
<dbReference type="PROSITE" id="PS50902">
    <property type="entry name" value="FLAVODOXIN_LIKE"/>
    <property type="match status" value="1"/>
</dbReference>
<dbReference type="PROSITE" id="PS50903">
    <property type="entry name" value="RUBREDOXIN_LIKE"/>
    <property type="match status" value="1"/>
</dbReference>
<protein>
    <recommendedName>
        <fullName evidence="1">Anaerobic nitric oxide reductase flavorubredoxin</fullName>
        <shortName evidence="1">FlRd</shortName>
        <shortName evidence="1">FlavoRb</shortName>
    </recommendedName>
</protein>
<gene>
    <name evidence="1" type="primary">norV</name>
    <name evidence="1" type="synonym">flrD</name>
    <name type="ordered locus">SDY_2907</name>
</gene>
<proteinExistence type="inferred from homology"/>
<evidence type="ECO:0000255" key="1">
    <source>
        <dbReference type="HAMAP-Rule" id="MF_01312"/>
    </source>
</evidence>
<keyword id="KW-0963">Cytoplasm</keyword>
<keyword id="KW-0249">Electron transport</keyword>
<keyword id="KW-0285">Flavoprotein</keyword>
<keyword id="KW-0288">FMN</keyword>
<keyword id="KW-0408">Iron</keyword>
<keyword id="KW-0479">Metal-binding</keyword>
<keyword id="KW-0560">Oxidoreductase</keyword>
<keyword id="KW-1185">Reference proteome</keyword>
<keyword id="KW-0813">Transport</keyword>
<accession>Q32CL8</accession>
<name>NORV_SHIDS</name>
<reference key="1">
    <citation type="journal article" date="2005" name="Nucleic Acids Res.">
        <title>Genome dynamics and diversity of Shigella species, the etiologic agents of bacillary dysentery.</title>
        <authorList>
            <person name="Yang F."/>
            <person name="Yang J."/>
            <person name="Zhang X."/>
            <person name="Chen L."/>
            <person name="Jiang Y."/>
            <person name="Yan Y."/>
            <person name="Tang X."/>
            <person name="Wang J."/>
            <person name="Xiong Z."/>
            <person name="Dong J."/>
            <person name="Xue Y."/>
            <person name="Zhu Y."/>
            <person name="Xu X."/>
            <person name="Sun L."/>
            <person name="Chen S."/>
            <person name="Nie H."/>
            <person name="Peng J."/>
            <person name="Xu J."/>
            <person name="Wang Y."/>
            <person name="Yuan Z."/>
            <person name="Wen Y."/>
            <person name="Yao Z."/>
            <person name="Shen Y."/>
            <person name="Qiang B."/>
            <person name="Hou Y."/>
            <person name="Yu J."/>
            <person name="Jin Q."/>
        </authorList>
    </citation>
    <scope>NUCLEOTIDE SEQUENCE [LARGE SCALE GENOMIC DNA]</scope>
    <source>
        <strain>Sd197</strain>
    </source>
</reference>
<sequence length="479" mass="54265">MSIVVKNNIHWVGQRDWEVRDFHGTEYKTLRGSSYNSYLIREEKNVLIDTVDHKFSREFVQNLRNEIDLADIDYIVINHAEEDHAGALTELMAQIPDTPIYCTANAIDSINGHHHHPEWNFNVVKTGDTLDIGNGKQLIFVETPMLHWPDSMMTYLTGDAVLFSNDAFGQHYCDEHLFNDEVDQTELFEQCQRYYSNILTPFSRLVTPKITEILGFNLPVDMIATSHGVVWRDNPTQIVELYLKWAADYQEDRITIFYDTMSNNTRMMADAIAQGIAETDPRVAVKIFNIARSDKNEILTNVFRSKGVLVGTSTMNNVMMPKIAGLVEEMTGLRFRNKRASAFGSHGWSGGAVDRLSTRLQDAGFEMSLSLKAKWRPDQDALELCREHGREIARQWALAPLPQSTVNTVVKEETSATTTADLGPRMQCSVCQWIYDPAKGEPMQDVAPGTPWSEVPDNFLCPECSLGKDVFEELASEAK</sequence>
<comment type="function">
    <text evidence="1">Anaerobic nitric oxide reductase; uses NADH to detoxify nitric oxide (NO), protecting several 4Fe-4S NO-sensitive enzymes. Has at least 2 reductase partners, only one of which (NorW, flavorubredoxin reductase) has been identified. NO probably binds to the di-iron center; electrons enter from the NorW at rubredoxin and are transferred sequentially to the FMN center and the di-iron center. Also able to function as an aerobic oxygen reductase.</text>
</comment>
<comment type="cofactor">
    <cofactor evidence="1">
        <name>Fe cation</name>
        <dbReference type="ChEBI" id="CHEBI:24875"/>
    </cofactor>
    <text evidence="1">Binds 3 Fe cations per monomer.</text>
</comment>
<comment type="cofactor">
    <cofactor evidence="1">
        <name>FMN</name>
        <dbReference type="ChEBI" id="CHEBI:58210"/>
    </cofactor>
    <text evidence="1">Binds 1 FMN per monomer.</text>
</comment>
<comment type="pathway">
    <text evidence="1">Nitrogen metabolism; nitric oxide reduction.</text>
</comment>
<comment type="subunit">
    <text evidence="1">Homotetramer.</text>
</comment>
<comment type="subcellular location">
    <subcellularLocation>
        <location evidence="1">Cytoplasm</location>
    </subcellularLocation>
</comment>
<comment type="similarity">
    <text evidence="1">In the N-terminal section; belongs to the zinc metallo-hydrolase group 3 family.</text>
</comment>